<keyword id="KW-0119">Carbohydrate metabolism</keyword>
<keyword id="KW-0238">DNA-binding</keyword>
<keyword id="KW-0678">Repressor</keyword>
<keyword id="KW-0804">Transcription</keyword>
<keyword id="KW-0805">Transcription regulation</keyword>
<evidence type="ECO:0000255" key="1">
    <source>
        <dbReference type="HAMAP-Rule" id="MF_02108"/>
    </source>
</evidence>
<protein>
    <recommendedName>
        <fullName evidence="1">HTH-type transcriptional regulator MurR</fullName>
    </recommendedName>
    <alternativeName>
        <fullName evidence="1">MurPQ operon repressor</fullName>
    </alternativeName>
</protein>
<sequence length="285" mass="31283">MLYLTKISNAGSEFTENEQKIADFLRARVSELKSVSSRQMAKQLGISQSSIVKFAQKLGAQGFTELRMALIGEYSASREKTNATALHLHSSITSDDSLEVIARKLNREKELALEQTCALFDYARLQKIIDVISKAQFIQITGLGGSALVGRDLSFKLMKIGYRVACEADTHVQATVSQALKKGDVQIAISYSGSKKEIVLCAEAARKQGATVIAITSLADSPLRRLAHFTLDTVSGETEWRSSSMSTRTAQNSVTDLLFVGLVQLNDVESLKMIQRSSELTQRLK</sequence>
<gene>
    <name evidence="1" type="primary">murR</name>
    <name type="ordered locus">ECBD_1254</name>
    <name type="ordered locus">ECD_02327</name>
    <name type="ordered locus">B21_02288</name>
</gene>
<name>MURR_ECOBD</name>
<accession>C5W7D8</accession>
<accession>C6EL50</accession>
<feature type="chain" id="PRO_0000387755" description="HTH-type transcriptional regulator MurR">
    <location>
        <begin position="1"/>
        <end position="285"/>
    </location>
</feature>
<feature type="domain" description="HTH rpiR-type" evidence="1">
    <location>
        <begin position="1"/>
        <end position="77"/>
    </location>
</feature>
<feature type="domain" description="SIS" evidence="1">
    <location>
        <begin position="128"/>
        <end position="268"/>
    </location>
</feature>
<feature type="DNA-binding region" description="H-T-H motif" evidence="1">
    <location>
        <begin position="37"/>
        <end position="56"/>
    </location>
</feature>
<dbReference type="EMBL" id="AM946981">
    <property type="protein sequence ID" value="CAQ32805.1"/>
    <property type="molecule type" value="Genomic_DNA"/>
</dbReference>
<dbReference type="EMBL" id="CP001665">
    <property type="protein sequence ID" value="ACT28319.1"/>
    <property type="molecule type" value="Genomic_DNA"/>
</dbReference>
<dbReference type="EMBL" id="CP001509">
    <property type="protein sequence ID" value="ACT44148.1"/>
    <property type="molecule type" value="Genomic_DNA"/>
</dbReference>
<dbReference type="RefSeq" id="WP_000966478.1">
    <property type="nucleotide sequence ID" value="NZ_JADXDS010000011.1"/>
</dbReference>
<dbReference type="SMR" id="C5W7D8"/>
<dbReference type="KEGG" id="ebd:ECBD_1254"/>
<dbReference type="KEGG" id="ebe:B21_02288"/>
<dbReference type="KEGG" id="ebl:ECD_02327"/>
<dbReference type="PATRIC" id="fig|469008.15.peg.2341"/>
<dbReference type="eggNOG" id="COG1737">
    <property type="taxonomic scope" value="Bacteria"/>
</dbReference>
<dbReference type="HOGENOM" id="CLU_055769_0_2_6"/>
<dbReference type="UniPathway" id="UPA00342"/>
<dbReference type="GO" id="GO:0097367">
    <property type="term" value="F:carbohydrate derivative binding"/>
    <property type="evidence" value="ECO:0007669"/>
    <property type="project" value="InterPro"/>
</dbReference>
<dbReference type="GO" id="GO:0003677">
    <property type="term" value="F:DNA binding"/>
    <property type="evidence" value="ECO:0007669"/>
    <property type="project" value="UniProtKB-KW"/>
</dbReference>
<dbReference type="GO" id="GO:0003700">
    <property type="term" value="F:DNA-binding transcription factor activity"/>
    <property type="evidence" value="ECO:0007669"/>
    <property type="project" value="UniProtKB-UniRule"/>
</dbReference>
<dbReference type="GO" id="GO:1901135">
    <property type="term" value="P:carbohydrate derivative metabolic process"/>
    <property type="evidence" value="ECO:0007669"/>
    <property type="project" value="InterPro"/>
</dbReference>
<dbReference type="GO" id="GO:0097173">
    <property type="term" value="P:N-acetylmuramic acid catabolic process"/>
    <property type="evidence" value="ECO:0007669"/>
    <property type="project" value="UniProtKB-UniPathway"/>
</dbReference>
<dbReference type="GO" id="GO:0045892">
    <property type="term" value="P:negative regulation of DNA-templated transcription"/>
    <property type="evidence" value="ECO:0007669"/>
    <property type="project" value="UniProtKB-UniRule"/>
</dbReference>
<dbReference type="GO" id="GO:0043470">
    <property type="term" value="P:regulation of carbohydrate catabolic process"/>
    <property type="evidence" value="ECO:0007669"/>
    <property type="project" value="UniProtKB-UniRule"/>
</dbReference>
<dbReference type="CDD" id="cd05013">
    <property type="entry name" value="SIS_RpiR"/>
    <property type="match status" value="1"/>
</dbReference>
<dbReference type="FunFam" id="3.40.50.10490:FF:000028">
    <property type="entry name" value="HTH-type transcriptional regulator MurR"/>
    <property type="match status" value="1"/>
</dbReference>
<dbReference type="Gene3D" id="3.40.50.10490">
    <property type="entry name" value="Glucose-6-phosphate isomerase like protein, domain 1"/>
    <property type="match status" value="1"/>
</dbReference>
<dbReference type="Gene3D" id="1.10.10.10">
    <property type="entry name" value="Winged helix-like DNA-binding domain superfamily/Winged helix DNA-binding domain"/>
    <property type="match status" value="1"/>
</dbReference>
<dbReference type="HAMAP" id="MF_02108">
    <property type="entry name" value="HTH_type_MurR"/>
    <property type="match status" value="1"/>
</dbReference>
<dbReference type="InterPro" id="IPR009057">
    <property type="entry name" value="Homeodomain-like_sf"/>
</dbReference>
<dbReference type="InterPro" id="IPR000281">
    <property type="entry name" value="HTH_RpiR"/>
</dbReference>
<dbReference type="InterPro" id="IPR047640">
    <property type="entry name" value="RpiR-like"/>
</dbReference>
<dbReference type="InterPro" id="IPR035472">
    <property type="entry name" value="RpiR-like_SIS"/>
</dbReference>
<dbReference type="InterPro" id="IPR001347">
    <property type="entry name" value="SIS_dom"/>
</dbReference>
<dbReference type="InterPro" id="IPR046348">
    <property type="entry name" value="SIS_dom_sf"/>
</dbReference>
<dbReference type="InterPro" id="IPR022821">
    <property type="entry name" value="Tscrpt_reg_HTH_MurR"/>
</dbReference>
<dbReference type="InterPro" id="IPR036388">
    <property type="entry name" value="WH-like_DNA-bd_sf"/>
</dbReference>
<dbReference type="NCBIfam" id="NF012026">
    <property type="entry name" value="PRK15482.1"/>
    <property type="match status" value="1"/>
</dbReference>
<dbReference type="PANTHER" id="PTHR30514">
    <property type="entry name" value="GLUCOKINASE"/>
    <property type="match status" value="1"/>
</dbReference>
<dbReference type="PANTHER" id="PTHR30514:SF17">
    <property type="entry name" value="HTH-TYPE TRANSCRIPTIONAL REGULATOR MURR"/>
    <property type="match status" value="1"/>
</dbReference>
<dbReference type="Pfam" id="PF01418">
    <property type="entry name" value="HTH_6"/>
    <property type="match status" value="1"/>
</dbReference>
<dbReference type="Pfam" id="PF01380">
    <property type="entry name" value="SIS"/>
    <property type="match status" value="1"/>
</dbReference>
<dbReference type="SUPFAM" id="SSF46689">
    <property type="entry name" value="Homeodomain-like"/>
    <property type="match status" value="1"/>
</dbReference>
<dbReference type="SUPFAM" id="SSF53697">
    <property type="entry name" value="SIS domain"/>
    <property type="match status" value="1"/>
</dbReference>
<dbReference type="PROSITE" id="PS51071">
    <property type="entry name" value="HTH_RPIR"/>
    <property type="match status" value="1"/>
</dbReference>
<dbReference type="PROSITE" id="PS51464">
    <property type="entry name" value="SIS"/>
    <property type="match status" value="1"/>
</dbReference>
<comment type="function">
    <text evidence="1">Represses the expression of the murPQ operon involved in the uptake and degradation of N-acetylmuramic acid (MurNAc). Binds to two adjacent inverted repeats within the operator region. MurNAc 6-phosphate, the substrate of MurQ, is the specific inducer that weakens binding of MurR to the operator.</text>
</comment>
<comment type="pathway">
    <text>Amino-sugar metabolism; N-acetylmuramate degradation [regulation].</text>
</comment>
<comment type="subunit">
    <text evidence="1">Homotetramer.</text>
</comment>
<reference key="1">
    <citation type="submission" date="2009-06" db="EMBL/GenBank/DDBJ databases">
        <title>Sequencing and gene expression analysis of Escherichia coli BL21.</title>
        <authorList>
            <person name="Leparc G."/>
            <person name="Striedner G."/>
            <person name="Bayer K."/>
            <person name="Kreil D."/>
            <person name="Krempl P.M."/>
        </authorList>
    </citation>
    <scope>NUCLEOTIDE SEQUENCE [LARGE SCALE GENOMIC DNA]</scope>
    <source>
        <strain>B / BL21-DE3</strain>
    </source>
</reference>
<reference key="2">
    <citation type="submission" date="2009-07" db="EMBL/GenBank/DDBJ databases">
        <title>Complete sequence of Escherichia coli BL21(DE3).</title>
        <authorList>
            <person name="Lucas S."/>
            <person name="Copeland A."/>
            <person name="Lapidus A."/>
            <person name="Glavina del Rio T."/>
            <person name="Dalin E."/>
            <person name="Tice H."/>
            <person name="Bruce D."/>
            <person name="Goodwin L."/>
            <person name="Pitluck S."/>
            <person name="LaButti K.M."/>
            <person name="Clum A."/>
            <person name="Larimer F."/>
            <person name="Land M."/>
            <person name="Hauser L."/>
            <person name="Kyrpides N."/>
            <person name="Anderson I."/>
            <person name="Sorek R."/>
            <person name="Rubin E."/>
        </authorList>
    </citation>
    <scope>NUCLEOTIDE SEQUENCE [LARGE SCALE GENOMIC DNA]</scope>
    <source>
        <strain>B / BL21-DE3</strain>
    </source>
</reference>
<reference key="3">
    <citation type="journal article" date="2009" name="J. Mol. Biol.">
        <title>Genome sequences of Escherichia coli B strains REL606 and BL21(DE3).</title>
        <authorList>
            <person name="Jeong H."/>
            <person name="Barbe V."/>
            <person name="Lee C.H."/>
            <person name="Vallenet D."/>
            <person name="Yu D.S."/>
            <person name="Choi S.H."/>
            <person name="Couloux A."/>
            <person name="Lee S.W."/>
            <person name="Yoon S.H."/>
            <person name="Cattolico L."/>
            <person name="Hur C.G."/>
            <person name="Park H.S."/>
            <person name="Segurens B."/>
            <person name="Kim S.C."/>
            <person name="Oh T.K."/>
            <person name="Lenski R.E."/>
            <person name="Studier F.W."/>
            <person name="Daegelen P."/>
            <person name="Kim J.F."/>
        </authorList>
    </citation>
    <scope>NUCLEOTIDE SEQUENCE [LARGE SCALE GENOMIC DNA]</scope>
    <source>
        <strain>B / BL21-DE3</strain>
    </source>
</reference>
<organism>
    <name type="scientific">Escherichia coli (strain B / BL21-DE3)</name>
    <dbReference type="NCBI Taxonomy" id="469008"/>
    <lineage>
        <taxon>Bacteria</taxon>
        <taxon>Pseudomonadati</taxon>
        <taxon>Pseudomonadota</taxon>
        <taxon>Gammaproteobacteria</taxon>
        <taxon>Enterobacterales</taxon>
        <taxon>Enterobacteriaceae</taxon>
        <taxon>Escherichia</taxon>
    </lineage>
</organism>
<proteinExistence type="inferred from homology"/>